<gene>
    <name type="primary">rsuA</name>
    <name type="synonym">yejD</name>
    <name type="ordered locus">b2183</name>
    <name type="ordered locus">JW2171</name>
</gene>
<sequence length="231" mass="25865">MRLDKFIAQQLGVSRAIAGREIRGNRVTVDGEIVRNAAFKLLPEHDVAYDGNPLAQQHGPRYFMLNKPQGYVCSTDDPDHPTVLYFLDEPVAWKLHAAGRLDIDTTGLVLMTDDGQWSHRITSPRHHCEKTYLVTLESPVADDTAEQFAKGVQLHNEKDLTKPAVLEVITPTQVRLTISEGRYHQVKRMFAAVGNHVVELHRERIGGITLDADLAPGEYRPLTEEEIASVV</sequence>
<dbReference type="EC" id="5.4.99.19"/>
<dbReference type="EMBL" id="U00008">
    <property type="protein sequence ID" value="AAA16377.1"/>
    <property type="molecule type" value="Genomic_DNA"/>
</dbReference>
<dbReference type="EMBL" id="U00096">
    <property type="protein sequence ID" value="AAC75244.1"/>
    <property type="molecule type" value="Genomic_DNA"/>
</dbReference>
<dbReference type="EMBL" id="AP009048">
    <property type="protein sequence ID" value="BAE76648.1"/>
    <property type="molecule type" value="Genomic_DNA"/>
</dbReference>
<dbReference type="PIR" id="F64987">
    <property type="entry name" value="F64987"/>
</dbReference>
<dbReference type="RefSeq" id="NP_416688.1">
    <property type="nucleotide sequence ID" value="NC_000913.3"/>
</dbReference>
<dbReference type="RefSeq" id="WP_001234850.1">
    <property type="nucleotide sequence ID" value="NZ_STEB01000002.1"/>
</dbReference>
<dbReference type="PDB" id="1KSK">
    <property type="method" value="X-ray"/>
    <property type="resolution" value="2.00 A"/>
    <property type="chains" value="A=1-231"/>
</dbReference>
<dbReference type="PDB" id="1KSL">
    <property type="method" value="X-ray"/>
    <property type="resolution" value="2.10 A"/>
    <property type="chains" value="A=1-231"/>
</dbReference>
<dbReference type="PDB" id="1KSV">
    <property type="method" value="X-ray"/>
    <property type="resolution" value="2.65 A"/>
    <property type="chains" value="A=1-231"/>
</dbReference>
<dbReference type="PDBsum" id="1KSK"/>
<dbReference type="PDBsum" id="1KSL"/>
<dbReference type="PDBsum" id="1KSV"/>
<dbReference type="SMR" id="P0AA43"/>
<dbReference type="BioGRID" id="4260474">
    <property type="interactions" value="83"/>
</dbReference>
<dbReference type="DIP" id="DIP-35902N"/>
<dbReference type="FunCoup" id="P0AA43">
    <property type="interactions" value="567"/>
</dbReference>
<dbReference type="IntAct" id="P0AA43">
    <property type="interactions" value="40"/>
</dbReference>
<dbReference type="STRING" id="511145.b2183"/>
<dbReference type="DrugBank" id="DB03419">
    <property type="generic name" value="Uracil"/>
</dbReference>
<dbReference type="DrugBank" id="DB03685">
    <property type="generic name" value="Uridine monophosphate"/>
</dbReference>
<dbReference type="jPOST" id="P0AA43"/>
<dbReference type="PaxDb" id="511145-b2183"/>
<dbReference type="EnsemblBacteria" id="AAC75244">
    <property type="protein sequence ID" value="AAC75244"/>
    <property type="gene ID" value="b2183"/>
</dbReference>
<dbReference type="GeneID" id="75206437"/>
<dbReference type="GeneID" id="945378"/>
<dbReference type="KEGG" id="ecj:JW2171"/>
<dbReference type="KEGG" id="eco:b2183"/>
<dbReference type="KEGG" id="ecoc:C3026_12210"/>
<dbReference type="PATRIC" id="fig|1411691.4.peg.53"/>
<dbReference type="EchoBASE" id="EB1978"/>
<dbReference type="eggNOG" id="COG1187">
    <property type="taxonomic scope" value="Bacteria"/>
</dbReference>
<dbReference type="HOGENOM" id="CLU_024979_1_2_6"/>
<dbReference type="InParanoid" id="P0AA43"/>
<dbReference type="OMA" id="QGKYHQV"/>
<dbReference type="OrthoDB" id="9807213at2"/>
<dbReference type="PhylomeDB" id="P0AA43"/>
<dbReference type="BioCyc" id="EcoCyc:EG12044-MONOMER"/>
<dbReference type="BioCyc" id="MetaCyc:EG12044-MONOMER"/>
<dbReference type="BRENDA" id="5.4.99.19">
    <property type="organism ID" value="2026"/>
</dbReference>
<dbReference type="EvolutionaryTrace" id="P0AA43"/>
<dbReference type="PRO" id="PR:P0AA43"/>
<dbReference type="Proteomes" id="UP000000625">
    <property type="component" value="Chromosome"/>
</dbReference>
<dbReference type="GO" id="GO:0005829">
    <property type="term" value="C:cytosol"/>
    <property type="evidence" value="ECO:0000314"/>
    <property type="project" value="EcoCyc"/>
</dbReference>
<dbReference type="GO" id="GO:0160136">
    <property type="term" value="F:16S rRNA pseudouridine(516) synthase activity"/>
    <property type="evidence" value="ECO:0007669"/>
    <property type="project" value="UniProtKB-EC"/>
</dbReference>
<dbReference type="GO" id="GO:0009982">
    <property type="term" value="F:pseudouridine synthase activity"/>
    <property type="evidence" value="ECO:0000318"/>
    <property type="project" value="GO_Central"/>
</dbReference>
<dbReference type="GO" id="GO:0003723">
    <property type="term" value="F:RNA binding"/>
    <property type="evidence" value="ECO:0007669"/>
    <property type="project" value="UniProtKB-KW"/>
</dbReference>
<dbReference type="GO" id="GO:0120159">
    <property type="term" value="F:rRNA pseudouridine synthase activity"/>
    <property type="evidence" value="ECO:0000314"/>
    <property type="project" value="EcoCyc"/>
</dbReference>
<dbReference type="GO" id="GO:0000455">
    <property type="term" value="P:enzyme-directed rRNA pseudouridine synthesis"/>
    <property type="evidence" value="ECO:0000315"/>
    <property type="project" value="EcoCyc"/>
</dbReference>
<dbReference type="CDD" id="cd02553">
    <property type="entry name" value="PseudoU_synth_RsuA"/>
    <property type="match status" value="1"/>
</dbReference>
<dbReference type="CDD" id="cd00165">
    <property type="entry name" value="S4"/>
    <property type="match status" value="1"/>
</dbReference>
<dbReference type="FunFam" id="3.10.290.10:FF:000009">
    <property type="entry name" value="Pseudouridine synthase"/>
    <property type="match status" value="1"/>
</dbReference>
<dbReference type="FunFam" id="3.30.70.1560:FF:000001">
    <property type="entry name" value="Pseudouridine synthase"/>
    <property type="match status" value="1"/>
</dbReference>
<dbReference type="FunFam" id="3.30.70.580:FF:000004">
    <property type="entry name" value="Pseudouridine synthase"/>
    <property type="match status" value="1"/>
</dbReference>
<dbReference type="Gene3D" id="3.30.70.1560">
    <property type="entry name" value="Alpha-L RNA-binding motif"/>
    <property type="match status" value="1"/>
</dbReference>
<dbReference type="Gene3D" id="3.30.70.580">
    <property type="entry name" value="Pseudouridine synthase I, catalytic domain, N-terminal subdomain"/>
    <property type="match status" value="1"/>
</dbReference>
<dbReference type="Gene3D" id="3.10.290.10">
    <property type="entry name" value="RNA-binding S4 domain"/>
    <property type="match status" value="1"/>
</dbReference>
<dbReference type="InterPro" id="IPR042092">
    <property type="entry name" value="PsdUridine_s_RsuA/RluB/E/F_cat"/>
</dbReference>
<dbReference type="InterPro" id="IPR020103">
    <property type="entry name" value="PsdUridine_synth_cat_dom_sf"/>
</dbReference>
<dbReference type="InterPro" id="IPR006145">
    <property type="entry name" value="PsdUridine_synth_RsuA/RluA"/>
</dbReference>
<dbReference type="InterPro" id="IPR000748">
    <property type="entry name" value="PsdUridine_synth_RsuA/RluB/E/F"/>
</dbReference>
<dbReference type="InterPro" id="IPR018496">
    <property type="entry name" value="PsdUridine_synth_RsuA/RluB_CS"/>
</dbReference>
<dbReference type="InterPro" id="IPR050343">
    <property type="entry name" value="RsuA_PseudoU_synthase"/>
</dbReference>
<dbReference type="InterPro" id="IPR002942">
    <property type="entry name" value="S4_RNA-bd"/>
</dbReference>
<dbReference type="InterPro" id="IPR036986">
    <property type="entry name" value="S4_RNA-bd_sf"/>
</dbReference>
<dbReference type="InterPro" id="IPR020094">
    <property type="entry name" value="TruA/RsuA/RluB/E/F_N"/>
</dbReference>
<dbReference type="NCBIfam" id="NF008097">
    <property type="entry name" value="PRK10839.1"/>
    <property type="match status" value="1"/>
</dbReference>
<dbReference type="NCBIfam" id="TIGR00093">
    <property type="entry name" value="pseudouridine synthase"/>
    <property type="match status" value="1"/>
</dbReference>
<dbReference type="PANTHER" id="PTHR47683:SF4">
    <property type="entry name" value="PSEUDOURIDINE SYNTHASE"/>
    <property type="match status" value="1"/>
</dbReference>
<dbReference type="PANTHER" id="PTHR47683">
    <property type="entry name" value="PSEUDOURIDINE SYNTHASE FAMILY PROTEIN-RELATED"/>
    <property type="match status" value="1"/>
</dbReference>
<dbReference type="Pfam" id="PF00849">
    <property type="entry name" value="PseudoU_synth_2"/>
    <property type="match status" value="1"/>
</dbReference>
<dbReference type="Pfam" id="PF01479">
    <property type="entry name" value="S4"/>
    <property type="match status" value="1"/>
</dbReference>
<dbReference type="SMART" id="SM00363">
    <property type="entry name" value="S4"/>
    <property type="match status" value="1"/>
</dbReference>
<dbReference type="SUPFAM" id="SSF55174">
    <property type="entry name" value="Alpha-L RNA-binding motif"/>
    <property type="match status" value="1"/>
</dbReference>
<dbReference type="SUPFAM" id="SSF55120">
    <property type="entry name" value="Pseudouridine synthase"/>
    <property type="match status" value="1"/>
</dbReference>
<dbReference type="PROSITE" id="PS01149">
    <property type="entry name" value="PSI_RSU"/>
    <property type="match status" value="1"/>
</dbReference>
<dbReference type="PROSITE" id="PS50889">
    <property type="entry name" value="S4"/>
    <property type="match status" value="1"/>
</dbReference>
<keyword id="KW-0002">3D-structure</keyword>
<keyword id="KW-0903">Direct protein sequencing</keyword>
<keyword id="KW-0413">Isomerase</keyword>
<keyword id="KW-1185">Reference proteome</keyword>
<keyword id="KW-0694">RNA-binding</keyword>
<keyword id="KW-0698">rRNA processing</keyword>
<reference key="1">
    <citation type="journal article" date="1995" name="Biochemistry">
        <title>Purification, cloning, and properties of the 16S RNA pseudouridine 516 synthase from Escherichia coli.</title>
        <authorList>
            <person name="Wrzesinski J."/>
            <person name="Bakin A."/>
            <person name="Nurse K."/>
            <person name="Lane B.G."/>
            <person name="Ofengand J."/>
        </authorList>
    </citation>
    <scope>NUCLEOTIDE SEQUENCE [GENOMIC DNA]</scope>
    <scope>PROTEIN SEQUENCE OF 1-13</scope>
    <scope>FUNCTION</scope>
    <scope>CATALYTIC ACTIVITY</scope>
    <scope>SUBSTRATE SPECIFICITY</scope>
</reference>
<reference key="2">
    <citation type="submission" date="1993-10" db="EMBL/GenBank/DDBJ databases">
        <authorList>
            <person name="Richterich P."/>
            <person name="Lakey N."/>
            <person name="Gryan G."/>
            <person name="Jaehn L."/>
            <person name="Mintz L."/>
            <person name="Robison K."/>
            <person name="Church G.M."/>
        </authorList>
    </citation>
    <scope>NUCLEOTIDE SEQUENCE [GENOMIC DNA]</scope>
    <source>
        <strain>K12 / BHB2600</strain>
    </source>
</reference>
<reference key="3">
    <citation type="journal article" date="1997" name="Science">
        <title>The complete genome sequence of Escherichia coli K-12.</title>
        <authorList>
            <person name="Blattner F.R."/>
            <person name="Plunkett G. III"/>
            <person name="Bloch C.A."/>
            <person name="Perna N.T."/>
            <person name="Burland V."/>
            <person name="Riley M."/>
            <person name="Collado-Vides J."/>
            <person name="Glasner J.D."/>
            <person name="Rode C.K."/>
            <person name="Mayhew G.F."/>
            <person name="Gregor J."/>
            <person name="Davis N.W."/>
            <person name="Kirkpatrick H.A."/>
            <person name="Goeden M.A."/>
            <person name="Rose D.J."/>
            <person name="Mau B."/>
            <person name="Shao Y."/>
        </authorList>
    </citation>
    <scope>NUCLEOTIDE SEQUENCE [LARGE SCALE GENOMIC DNA]</scope>
    <source>
        <strain>K12 / MG1655 / ATCC 47076</strain>
    </source>
</reference>
<reference key="4">
    <citation type="journal article" date="2006" name="Mol. Syst. Biol.">
        <title>Highly accurate genome sequences of Escherichia coli K-12 strains MG1655 and W3110.</title>
        <authorList>
            <person name="Hayashi K."/>
            <person name="Morooka N."/>
            <person name="Yamamoto Y."/>
            <person name="Fujita K."/>
            <person name="Isono K."/>
            <person name="Choi S."/>
            <person name="Ohtsubo E."/>
            <person name="Baba T."/>
            <person name="Wanner B.L."/>
            <person name="Mori H."/>
            <person name="Horiuchi T."/>
        </authorList>
    </citation>
    <scope>NUCLEOTIDE SEQUENCE [LARGE SCALE GENOMIC DNA]</scope>
    <source>
        <strain>K12 / W3110 / ATCC 27325 / DSM 5911</strain>
    </source>
</reference>
<reference key="5">
    <citation type="journal article" date="1999" name="RNA">
        <title>16S ribosomal RNA pseudouridine synthase RsuA of Escherichia coli: deletion, mutation of the conserved Asp102 residue, and sequence comparison among all other pseudouridine synthases.</title>
        <authorList>
            <person name="Conrad J."/>
            <person name="Niu L."/>
            <person name="Rudd K."/>
            <person name="Lane B.G."/>
            <person name="Ofengand J."/>
        </authorList>
    </citation>
    <scope>FUNCTION</scope>
    <scope>CATALYTIC ACTIVITY</scope>
    <scope>MUTAGENESIS OF ASP-102</scope>
    <source>
        <strain>BL21-DE3</strain>
        <strain>K12 / MG1655 / ATCC 47076</strain>
    </source>
</reference>
<reference key="6">
    <citation type="journal article" date="2002" name="Nat. Struct. Biol.">
        <title>Structure of the 16S rRNA pseudouridine synthase RsuA bound to uracil and UMP.</title>
        <authorList>
            <person name="Sivaraman J."/>
            <person name="Sauve V."/>
            <person name="Larocque R."/>
            <person name="Stura E.A."/>
            <person name="Schrag J.D."/>
            <person name="Cygler M."/>
            <person name="Matte A."/>
        </authorList>
    </citation>
    <scope>X-RAY CRYSTALLOGRAPHY (2.0 ANGSTROMS) IN COMPLEXES WITH URACIL AND UMP</scope>
    <scope>ACTIVE SITE</scope>
</reference>
<name>RSUA_ECOLI</name>
<protein>
    <recommendedName>
        <fullName>Ribosomal small subunit pseudouridine synthase A</fullName>
        <ecNumber>5.4.99.19</ecNumber>
    </recommendedName>
    <alternativeName>
        <fullName>16S pseudouridylate 516 synthase</fullName>
    </alternativeName>
    <alternativeName>
        <fullName>16S rRNA pseudouridine(516) synthase</fullName>
    </alternativeName>
    <alternativeName>
        <fullName>rRNA pseudouridylate synthase A</fullName>
    </alternativeName>
    <alternativeName>
        <fullName>rRNA-uridine isomerase A</fullName>
    </alternativeName>
</protein>
<feature type="chain" id="PRO_0000099966" description="Ribosomal small subunit pseudouridine synthase A">
    <location>
        <begin position="1"/>
        <end position="231"/>
    </location>
</feature>
<feature type="domain" description="S4 RNA-binding" evidence="1">
    <location>
        <begin position="1"/>
        <end position="68"/>
    </location>
</feature>
<feature type="active site" description="Nucleophile" evidence="5">
    <location>
        <position position="102"/>
    </location>
</feature>
<feature type="mutagenesis site" description="Loss of activity." evidence="2">
    <original>D</original>
    <variation>N</variation>
    <variation>T</variation>
    <location>
        <position position="102"/>
    </location>
</feature>
<feature type="helix" evidence="6">
    <location>
        <begin position="3"/>
        <end position="11"/>
    </location>
</feature>
<feature type="helix" evidence="6">
    <location>
        <begin position="15"/>
        <end position="23"/>
    </location>
</feature>
<feature type="turn" evidence="7">
    <location>
        <begin position="24"/>
        <end position="26"/>
    </location>
</feature>
<feature type="strand" evidence="6">
    <location>
        <begin position="27"/>
        <end position="29"/>
    </location>
</feature>
<feature type="strand" evidence="6">
    <location>
        <begin position="47"/>
        <end position="49"/>
    </location>
</feature>
<feature type="strand" evidence="6">
    <location>
        <begin position="52"/>
        <end position="54"/>
    </location>
</feature>
<feature type="strand" evidence="6">
    <location>
        <begin position="62"/>
        <end position="67"/>
    </location>
</feature>
<feature type="strand" evidence="6">
    <location>
        <begin position="72"/>
        <end position="76"/>
    </location>
</feature>
<feature type="strand" evidence="6">
    <location>
        <begin position="78"/>
        <end position="80"/>
    </location>
</feature>
<feature type="helix" evidence="6">
    <location>
        <begin position="83"/>
        <end position="86"/>
    </location>
</feature>
<feature type="helix" evidence="6">
    <location>
        <begin position="92"/>
        <end position="94"/>
    </location>
</feature>
<feature type="strand" evidence="6">
    <location>
        <begin position="96"/>
        <end position="99"/>
    </location>
</feature>
<feature type="strand" evidence="6">
    <location>
        <begin position="106"/>
        <end position="113"/>
    </location>
</feature>
<feature type="helix" evidence="6">
    <location>
        <begin position="115"/>
        <end position="122"/>
    </location>
</feature>
<feature type="strand" evidence="6">
    <location>
        <begin position="130"/>
        <end position="138"/>
    </location>
</feature>
<feature type="helix" evidence="6">
    <location>
        <begin position="144"/>
        <end position="150"/>
    </location>
</feature>
<feature type="strand" evidence="6">
    <location>
        <begin position="165"/>
        <end position="170"/>
    </location>
</feature>
<feature type="strand" evidence="6">
    <location>
        <begin position="173"/>
        <end position="179"/>
    </location>
</feature>
<feature type="helix" evidence="6">
    <location>
        <begin position="185"/>
        <end position="192"/>
    </location>
</feature>
<feature type="strand" evidence="6">
    <location>
        <begin position="197"/>
        <end position="205"/>
    </location>
</feature>
<feature type="strand" evidence="6">
    <location>
        <begin position="219"/>
        <end position="221"/>
    </location>
</feature>
<feature type="helix" evidence="6">
    <location>
        <begin position="224"/>
        <end position="227"/>
    </location>
</feature>
<comment type="function">
    <text evidence="2 3">Responsible for synthesis of pseudouridine from uracil-516 in 16S ribosomal RNA.</text>
</comment>
<comment type="catalytic activity">
    <reaction evidence="2 3">
        <text>uridine(516) in 16S rRNA = pseudouridine(516) in 16S rRNA</text>
        <dbReference type="Rhea" id="RHEA:38867"/>
        <dbReference type="Rhea" id="RHEA-COMP:10089"/>
        <dbReference type="Rhea" id="RHEA-COMP:10090"/>
        <dbReference type="ChEBI" id="CHEBI:65314"/>
        <dbReference type="ChEBI" id="CHEBI:65315"/>
        <dbReference type="EC" id="5.4.99.19"/>
    </reaction>
</comment>
<comment type="subunit">
    <text>Monomer.</text>
</comment>
<comment type="interaction">
    <interactant intactId="EBI-557810">
        <id>P0AA43</id>
    </interactant>
    <interactant intactId="EBI-544602">
        <id>P0A7R5</id>
        <label>rpsJ</label>
    </interactant>
    <organismsDiffer>false</organismsDiffer>
    <experiments>3</experiments>
</comment>
<comment type="similarity">
    <text evidence="4">Belongs to the pseudouridine synthase RsuA family.</text>
</comment>
<organism>
    <name type="scientific">Escherichia coli (strain K12)</name>
    <dbReference type="NCBI Taxonomy" id="83333"/>
    <lineage>
        <taxon>Bacteria</taxon>
        <taxon>Pseudomonadati</taxon>
        <taxon>Pseudomonadota</taxon>
        <taxon>Gammaproteobacteria</taxon>
        <taxon>Enterobacterales</taxon>
        <taxon>Enterobacteriaceae</taxon>
        <taxon>Escherichia</taxon>
    </lineage>
</organism>
<evidence type="ECO:0000255" key="1">
    <source>
        <dbReference type="PROSITE-ProRule" id="PRU00182"/>
    </source>
</evidence>
<evidence type="ECO:0000269" key="2">
    <source>
    </source>
</evidence>
<evidence type="ECO:0000269" key="3">
    <source>
    </source>
</evidence>
<evidence type="ECO:0000305" key="4"/>
<evidence type="ECO:0000305" key="5">
    <source>
    </source>
</evidence>
<evidence type="ECO:0007829" key="6">
    <source>
        <dbReference type="PDB" id="1KSK"/>
    </source>
</evidence>
<evidence type="ECO:0007829" key="7">
    <source>
        <dbReference type="PDB" id="1KSV"/>
    </source>
</evidence>
<proteinExistence type="evidence at protein level"/>
<accession>P0AA43</accession>
<accession>P33918</accession>
<accession>Q2MAQ8</accession>